<name>UFM1_DANRE</name>
<dbReference type="EMBL" id="AY394956">
    <property type="protein sequence ID" value="AAQ94583.1"/>
    <property type="molecule type" value="mRNA"/>
</dbReference>
<dbReference type="EMBL" id="BC044145">
    <property type="protein sequence ID" value="AAH44145.1"/>
    <property type="molecule type" value="mRNA"/>
</dbReference>
<dbReference type="RefSeq" id="NP_997792.1">
    <property type="nucleotide sequence ID" value="NM_212627.1"/>
</dbReference>
<dbReference type="SMR" id="Q803Y4"/>
<dbReference type="FunCoup" id="Q803Y4">
    <property type="interactions" value="1201"/>
</dbReference>
<dbReference type="STRING" id="7955.ENSDARP00000064392"/>
<dbReference type="PaxDb" id="7955-ENSDARP00000064392"/>
<dbReference type="GeneID" id="322756"/>
<dbReference type="KEGG" id="dre:322756"/>
<dbReference type="AGR" id="ZFIN:ZDB-GENE-040426-2930"/>
<dbReference type="CTD" id="51569"/>
<dbReference type="ZFIN" id="ZDB-GENE-040426-2930">
    <property type="gene designation" value="ufm1"/>
</dbReference>
<dbReference type="eggNOG" id="KOG3483">
    <property type="taxonomic scope" value="Eukaryota"/>
</dbReference>
<dbReference type="InParanoid" id="Q803Y4"/>
<dbReference type="OrthoDB" id="284357at2759"/>
<dbReference type="PhylomeDB" id="Q803Y4"/>
<dbReference type="TreeFam" id="TF312934"/>
<dbReference type="PRO" id="PR:Q803Y4"/>
<dbReference type="Proteomes" id="UP000000437">
    <property type="component" value="Chromosome 10"/>
</dbReference>
<dbReference type="GO" id="GO:0005737">
    <property type="term" value="C:cytoplasm"/>
    <property type="evidence" value="ECO:0000250"/>
    <property type="project" value="UniProtKB"/>
</dbReference>
<dbReference type="GO" id="GO:0005634">
    <property type="term" value="C:nucleus"/>
    <property type="evidence" value="ECO:0000250"/>
    <property type="project" value="UniProtKB"/>
</dbReference>
<dbReference type="GO" id="GO:1990592">
    <property type="term" value="P:protein K69-linked ufmylation"/>
    <property type="evidence" value="ECO:0000250"/>
    <property type="project" value="UniProtKB"/>
</dbReference>
<dbReference type="GO" id="GO:0071569">
    <property type="term" value="P:protein ufmylation"/>
    <property type="evidence" value="ECO:0000250"/>
    <property type="project" value="UniProtKB"/>
</dbReference>
<dbReference type="GO" id="GO:0034976">
    <property type="term" value="P:response to endoplasmic reticulum stress"/>
    <property type="evidence" value="ECO:0000250"/>
    <property type="project" value="UniProtKB"/>
</dbReference>
<dbReference type="GO" id="GO:0061709">
    <property type="term" value="P:reticulophagy"/>
    <property type="evidence" value="ECO:0000250"/>
    <property type="project" value="UniProtKB"/>
</dbReference>
<dbReference type="CDD" id="cd01766">
    <property type="entry name" value="Ubl_UFM1"/>
    <property type="match status" value="1"/>
</dbReference>
<dbReference type="FunFam" id="3.10.20.90:FF:000044">
    <property type="entry name" value="Ubiquitin-fold modifier 1"/>
    <property type="match status" value="1"/>
</dbReference>
<dbReference type="Gene3D" id="3.10.20.90">
    <property type="entry name" value="Phosphatidylinositol 3-kinase Catalytic Subunit, Chain A, domain 1"/>
    <property type="match status" value="1"/>
</dbReference>
<dbReference type="InterPro" id="IPR029071">
    <property type="entry name" value="Ubiquitin-like_domsf"/>
</dbReference>
<dbReference type="InterPro" id="IPR005375">
    <property type="entry name" value="UFM1"/>
</dbReference>
<dbReference type="PANTHER" id="PTHR15825">
    <property type="entry name" value="UBIQUITIN-FOLD MODIFIER 1"/>
    <property type="match status" value="1"/>
</dbReference>
<dbReference type="PANTHER" id="PTHR15825:SF0">
    <property type="entry name" value="UBIQUITIN-FOLD MODIFIER 1"/>
    <property type="match status" value="1"/>
</dbReference>
<dbReference type="Pfam" id="PF03671">
    <property type="entry name" value="Ufm1"/>
    <property type="match status" value="1"/>
</dbReference>
<dbReference type="PIRSF" id="PIRSF038027">
    <property type="entry name" value="Ubiquitin-like_Ufm1"/>
    <property type="match status" value="1"/>
</dbReference>
<dbReference type="SUPFAM" id="SSF54236">
    <property type="entry name" value="Ubiquitin-like"/>
    <property type="match status" value="1"/>
</dbReference>
<accession>Q803Y4</accession>
<accession>Q6TLE9</accession>
<gene>
    <name evidence="1" type="primary">ufm1</name>
    <name type="synonym">ubfm1</name>
    <name evidence="2" type="ORF">zgc:55335</name>
</gene>
<feature type="chain" id="PRO_0000042134" description="Ubiquitin-fold modifier 1">
    <location>
        <begin position="1"/>
        <end position="83"/>
    </location>
</feature>
<feature type="propeptide" id="PRO_0000042135" description="Removed in mature form" evidence="1">
    <location>
        <begin position="84"/>
        <end position="90"/>
    </location>
</feature>
<feature type="cross-link" description="Glycyl lysine isopeptide (Lys-Gly) (interchain with G-Cter in UFM1)" evidence="1">
    <location>
        <position position="69"/>
    </location>
</feature>
<feature type="cross-link" description="Glycyl lysine isopeptide (Gly-Lys) (interchain with K-? in acceptor proteins)" evidence="1">
    <location>
        <position position="83"/>
    </location>
</feature>
<feature type="sequence conflict" description="In Ref. 1; AAQ94583." evidence="3" ref="1">
    <original>G</original>
    <variation>S</variation>
    <location>
        <position position="47"/>
    </location>
</feature>
<comment type="function">
    <text evidence="1">Ubiquitin-like modifier which can be covalently attached via an isopeptide bond to lysine residues of substrate proteins as a monomer or a lysine-linked polymer. The so-called ufmylation, requires the ufm1-activating E1 enzyme uba5, the ufm1-conjugating E2 enzyme ufc1, and the ufm1-ligase E3 enzyme ufl1. Ufmylation is involved in various processes, such as ribosome recycling, response to DNA damage, transcription or reticulophagy (also called ER-phagy) induced in response to endoplasmic reticulum stress.</text>
</comment>
<comment type="subunit">
    <text evidence="1">Interacts with uba5. Interacts with ufc1.</text>
</comment>
<comment type="subcellular location">
    <subcellularLocation>
        <location evidence="1">Nucleus</location>
    </subcellularLocation>
    <subcellularLocation>
        <location evidence="1">Cytoplasm</location>
    </subcellularLocation>
</comment>
<comment type="PTM">
    <text evidence="1">UFM1 precursor is cleaved by UFSP1, promoting its maturation: processing of the C-terminal Ser-Cys dipeptide is required to expose its C-terminal conserved Gly residue.</text>
</comment>
<comment type="similarity">
    <text evidence="3">Belongs to the UFM1 family.</text>
</comment>
<organism>
    <name type="scientific">Danio rerio</name>
    <name type="common">Zebrafish</name>
    <name type="synonym">Brachydanio rerio</name>
    <dbReference type="NCBI Taxonomy" id="7955"/>
    <lineage>
        <taxon>Eukaryota</taxon>
        <taxon>Metazoa</taxon>
        <taxon>Chordata</taxon>
        <taxon>Craniata</taxon>
        <taxon>Vertebrata</taxon>
        <taxon>Euteleostomi</taxon>
        <taxon>Actinopterygii</taxon>
        <taxon>Neopterygii</taxon>
        <taxon>Teleostei</taxon>
        <taxon>Ostariophysi</taxon>
        <taxon>Cypriniformes</taxon>
        <taxon>Danionidae</taxon>
        <taxon>Danioninae</taxon>
        <taxon>Danio</taxon>
    </lineage>
</organism>
<protein>
    <recommendedName>
        <fullName evidence="1">Ubiquitin-fold modifier 1</fullName>
    </recommendedName>
</protein>
<keyword id="KW-0963">Cytoplasm</keyword>
<keyword id="KW-1017">Isopeptide bond</keyword>
<keyword id="KW-0539">Nucleus</keyword>
<keyword id="KW-1185">Reference proteome</keyword>
<keyword id="KW-0832">Ubl conjugation</keyword>
<keyword id="KW-0833">Ubl conjugation pathway</keyword>
<reference key="1">
    <citation type="journal article" date="2004" name="Proc. Natl. Acad. Sci. U.S.A.">
        <title>Hematopoietic gene expression profile in zebrafish kidney marrow.</title>
        <authorList>
            <person name="Song H.-D."/>
            <person name="Sun X.-J."/>
            <person name="Deng M."/>
            <person name="Zhang G.-W."/>
            <person name="Zhou Y."/>
            <person name="Wu X.-Y."/>
            <person name="Sheng Y."/>
            <person name="Chen Y."/>
            <person name="Ruan Z."/>
            <person name="Jiang C.-L."/>
            <person name="Fan H.-Y."/>
            <person name="Zon L.I."/>
            <person name="Kanki J.P."/>
            <person name="Liu T.X."/>
            <person name="Look A.T."/>
            <person name="Chen Z."/>
        </authorList>
    </citation>
    <scope>NUCLEOTIDE SEQUENCE [LARGE SCALE MRNA]</scope>
    <source>
        <tissue>Kidney marrow</tissue>
    </source>
</reference>
<reference key="2">
    <citation type="submission" date="2003-01" db="EMBL/GenBank/DDBJ databases">
        <authorList>
            <consortium name="NIH - Zebrafish Gene Collection (ZGC) project"/>
        </authorList>
    </citation>
    <scope>NUCLEOTIDE SEQUENCE [LARGE SCALE MRNA]</scope>
    <source>
        <strain>AB</strain>
    </source>
</reference>
<proteinExistence type="inferred from homology"/>
<sequence>MSKVTFKITLTSDPRLPYKVLSVPESTPFTAVLKFAAEEFKVPAATGAIITNDGIGINPAQTAGNVFLKHGSELRIIPRDRVGGGHQPRM</sequence>
<evidence type="ECO:0000250" key="1">
    <source>
        <dbReference type="UniProtKB" id="P61960"/>
    </source>
</evidence>
<evidence type="ECO:0000303" key="2">
    <source ref="2"/>
</evidence>
<evidence type="ECO:0000305" key="3"/>